<dbReference type="EC" id="5.6.2.4" evidence="2"/>
<dbReference type="EMBL" id="BC133060">
    <property type="protein sequence ID" value="AAI33061.1"/>
    <property type="molecule type" value="mRNA"/>
</dbReference>
<dbReference type="EMBL" id="BC121498">
    <property type="protein sequence ID" value="AAI21499.1"/>
    <property type="status" value="ALT_INIT"/>
    <property type="molecule type" value="mRNA"/>
</dbReference>
<dbReference type="RefSeq" id="NP_001072383.3">
    <property type="nucleotide sequence ID" value="NM_001078915.2"/>
</dbReference>
<dbReference type="SMR" id="A2RUV5"/>
<dbReference type="FunCoup" id="A2RUV5">
    <property type="interactions" value="805"/>
</dbReference>
<dbReference type="STRING" id="8364.ENSXETP00000051927"/>
<dbReference type="PaxDb" id="8364-ENSXETP00000062751"/>
<dbReference type="DNASU" id="779837"/>
<dbReference type="GeneID" id="779837"/>
<dbReference type="KEGG" id="xtr:779837"/>
<dbReference type="CTD" id="164045"/>
<dbReference type="eggNOG" id="KOG0952">
    <property type="taxonomic scope" value="Eukaryota"/>
</dbReference>
<dbReference type="InParanoid" id="A2RUV5"/>
<dbReference type="OrthoDB" id="5575at2759"/>
<dbReference type="Proteomes" id="UP000008143">
    <property type="component" value="Chromosome 4"/>
</dbReference>
<dbReference type="GO" id="GO:0005524">
    <property type="term" value="F:ATP binding"/>
    <property type="evidence" value="ECO:0007669"/>
    <property type="project" value="UniProtKB-KW"/>
</dbReference>
<dbReference type="GO" id="GO:0016887">
    <property type="term" value="F:ATP hydrolysis activity"/>
    <property type="evidence" value="ECO:0007669"/>
    <property type="project" value="RHEA"/>
</dbReference>
<dbReference type="GO" id="GO:0004386">
    <property type="term" value="F:helicase activity"/>
    <property type="evidence" value="ECO:0007669"/>
    <property type="project" value="UniProtKB-KW"/>
</dbReference>
<dbReference type="GO" id="GO:0003676">
    <property type="term" value="F:nucleic acid binding"/>
    <property type="evidence" value="ECO:0007669"/>
    <property type="project" value="InterPro"/>
</dbReference>
<dbReference type="GO" id="GO:0051321">
    <property type="term" value="P:meiotic cell cycle"/>
    <property type="evidence" value="ECO:0007669"/>
    <property type="project" value="UniProtKB-KW"/>
</dbReference>
<dbReference type="CDD" id="cd18023">
    <property type="entry name" value="DEXHc_HFM1"/>
    <property type="match status" value="1"/>
</dbReference>
<dbReference type="CDD" id="cd18795">
    <property type="entry name" value="SF2_C_Ski2"/>
    <property type="match status" value="1"/>
</dbReference>
<dbReference type="FunFam" id="3.40.50.300:FF:001076">
    <property type="entry name" value="ATP-dependent DNA helicase MER3"/>
    <property type="match status" value="1"/>
</dbReference>
<dbReference type="FunFam" id="3.40.50.300:FF:000950">
    <property type="entry name" value="probable ATP-dependent DNA helicase HFM1"/>
    <property type="match status" value="1"/>
</dbReference>
<dbReference type="FunFam" id="1.10.3380.10:FF:000006">
    <property type="entry name" value="probable ATP-dependent DNA helicase HFM1 isoform X1"/>
    <property type="match status" value="1"/>
</dbReference>
<dbReference type="FunFam" id="1.10.10.10:FF:000012">
    <property type="entry name" value="U5 small nuclear ribonucleoprotein helicase"/>
    <property type="match status" value="1"/>
</dbReference>
<dbReference type="Gene3D" id="3.40.50.300">
    <property type="entry name" value="P-loop containing nucleotide triphosphate hydrolases"/>
    <property type="match status" value="2"/>
</dbReference>
<dbReference type="Gene3D" id="1.10.3380.10">
    <property type="entry name" value="Sec63 N-terminal domain-like domain"/>
    <property type="match status" value="1"/>
</dbReference>
<dbReference type="Gene3D" id="1.10.10.10">
    <property type="entry name" value="Winged helix-like DNA-binding domain superfamily/Winged helix DNA-binding domain"/>
    <property type="match status" value="1"/>
</dbReference>
<dbReference type="InterPro" id="IPR011545">
    <property type="entry name" value="DEAD/DEAH_box_helicase_dom"/>
</dbReference>
<dbReference type="InterPro" id="IPR014001">
    <property type="entry name" value="Helicase_ATP-bd"/>
</dbReference>
<dbReference type="InterPro" id="IPR001650">
    <property type="entry name" value="Helicase_C-like"/>
</dbReference>
<dbReference type="InterPro" id="IPR052247">
    <property type="entry name" value="Meiotic_Crossover_Helicase"/>
</dbReference>
<dbReference type="InterPro" id="IPR027417">
    <property type="entry name" value="P-loop_NTPase"/>
</dbReference>
<dbReference type="InterPro" id="IPR004179">
    <property type="entry name" value="Sec63-dom"/>
</dbReference>
<dbReference type="InterPro" id="IPR036388">
    <property type="entry name" value="WH-like_DNA-bd_sf"/>
</dbReference>
<dbReference type="InterPro" id="IPR036390">
    <property type="entry name" value="WH_DNA-bd_sf"/>
</dbReference>
<dbReference type="PANTHER" id="PTHR47835:SF3">
    <property type="entry name" value="HELICASE FOR MEIOSIS 1"/>
    <property type="match status" value="1"/>
</dbReference>
<dbReference type="PANTHER" id="PTHR47835">
    <property type="entry name" value="HFM1, ATP DEPENDENT DNA HELICASE HOMOLOG"/>
    <property type="match status" value="1"/>
</dbReference>
<dbReference type="Pfam" id="PF00270">
    <property type="entry name" value="DEAD"/>
    <property type="match status" value="1"/>
</dbReference>
<dbReference type="Pfam" id="PF00271">
    <property type="entry name" value="Helicase_C"/>
    <property type="match status" value="1"/>
</dbReference>
<dbReference type="Pfam" id="PF02889">
    <property type="entry name" value="Sec63"/>
    <property type="match status" value="1"/>
</dbReference>
<dbReference type="Pfam" id="PF23445">
    <property type="entry name" value="SNRNP200_wHTH"/>
    <property type="match status" value="1"/>
</dbReference>
<dbReference type="SMART" id="SM00487">
    <property type="entry name" value="DEXDc"/>
    <property type="match status" value="1"/>
</dbReference>
<dbReference type="SMART" id="SM00490">
    <property type="entry name" value="HELICc"/>
    <property type="match status" value="1"/>
</dbReference>
<dbReference type="SMART" id="SM00973">
    <property type="entry name" value="Sec63"/>
    <property type="match status" value="1"/>
</dbReference>
<dbReference type="SUPFAM" id="SSF52540">
    <property type="entry name" value="P-loop containing nucleoside triphosphate hydrolases"/>
    <property type="match status" value="1"/>
</dbReference>
<dbReference type="SUPFAM" id="SSF158702">
    <property type="entry name" value="Sec63 N-terminal domain-like"/>
    <property type="match status" value="1"/>
</dbReference>
<dbReference type="SUPFAM" id="SSF46785">
    <property type="entry name" value="Winged helix' DNA-binding domain"/>
    <property type="match status" value="1"/>
</dbReference>
<dbReference type="PROSITE" id="PS51192">
    <property type="entry name" value="HELICASE_ATP_BIND_1"/>
    <property type="match status" value="1"/>
</dbReference>
<dbReference type="PROSITE" id="PS51194">
    <property type="entry name" value="HELICASE_CTER"/>
    <property type="match status" value="1"/>
</dbReference>
<reference key="1">
    <citation type="submission" date="2007-02" db="EMBL/GenBank/DDBJ databases">
        <authorList>
            <consortium name="NIH - Xenopus Gene Collection (XGC) project"/>
        </authorList>
    </citation>
    <scope>NUCLEOTIDE SEQUENCE [LARGE SCALE MRNA]</scope>
    <source>
        <tissue>Testis</tissue>
    </source>
</reference>
<protein>
    <recommendedName>
        <fullName>Probable ATP-dependent DNA helicase HFM1</fullName>
        <ecNumber evidence="2">5.6.2.4</ecNumber>
    </recommendedName>
    <alternativeName>
        <fullName evidence="5">DNA 3'-5' helicase HFM1</fullName>
    </alternativeName>
</protein>
<sequence>MTLPFSWITNDVSQCIDLTQDEHICSLSPVTDTEENMSAFKKSLFGKYDCSLNSEDQCLIVENGSSNFVTSKEAQKEAMKADSDICPPQQMAFNLFNETVVQKDMLNKEKFSHSASSNISNKDDAQYGIVTPVTEIPKQFRTVFKEFPYFNYIQSKALEHLLYSDRNFVLCAPTGSGKTVIFELAIIRLLMQVPMPWTNVKIVYMAPIKALCGQRYDDWKAKFGPVGLNCKELTGDTEMDDLFEIQHAHIIMTTPEKWDSMTRKWKDNTLVQLVRLFLIDEVHILKEENRGATLEVVVSRMKTIYSLSHLSEDRKAFIPMRFVAVSATIPNVEDIADWLSDENSPGVCMKMDESSRPVKLRKVVLGFPCSTKQSEFKFDLTLNYKIANIIQTYSDGRPTLVFCSTRKGVQQAASILTKDAKFVMSIEHKQRLQKCANSIKDSKLRDVLQYGVGYHHAGVDISDRKVIENSFLIGDLPVLFTTSTLAMGVNLPAHLVIVKSTMHYVSGMFQEYSETDILQMIGRAGRPQFDSTATAVIMTRLSTKEKYVHMLDGADTIESSLHKHLVEHLNAEIALHTITDVKVALEWIRSTFLYIRALKNPAYYGFSEGLDKIGIEAKLQELCLKNLNDLSSLGLIKMDEEINFKPTETGKLMALYYIAFNTAKLFHTIRGTETLAELVSLISSCSEFSDVQLRANERRVLNTLNKDKNRVTIRYPMEGKIKTKEMKVNCLIQAHLGCILVQDFSLTQDISKIFRHGTRLAKCLSEFLALQENKFSAFLNALILTKCFKSKLWENSSHISKQLEKIGVTLANAMVNAGLTTFKKIEDTNARELELIVNRHPPFGNQIKESVAHLPKYEIKFQQLAKYRATTAEVVLTVLLTNFKQLQKKRTAPDSHFVMLVIGDDDNQAIFKQKIMDSSLFKTGSWTRKIEIKRASKSTNVCLNLISSEYVGLDIQQSFNICYLGSDSFNADLVTQHKSENIFSQEIYKTSTKTKDIADTNWSMRQTAIKCATRECNHNCKNKDACGHECCKVGVSEKAEMKTNFYSYLNDLRTRNSVSSATPVKRLKMQMEAETRNVNLQNFVFTPKPSIRSPCLKIPENILLQAESSVLTNKYKASHQEETCCKYEIKGCGEKQTKGMPKKTCERRNLTDSDKCNSSSSENAAYVTFDLGNDIWDDFDDDNLLDASNISSLTDQHTSEFTDVSFSKNQPVSKSSLSAGHHEEARYNAMSINKDSYRYLNAKSEVFSQENTQCIDVVPSNQKLHGKMFSENTIKHMFTLQEETNYPVTSKMDSPHNGCWSSNIFFKTPENKTQERGCYHQEDETNAFIGIFNGIF</sequence>
<feature type="chain" id="PRO_0000324394" description="Probable ATP-dependent DNA helicase HFM1">
    <location>
        <begin position="1"/>
        <end position="1336"/>
    </location>
</feature>
<feature type="domain" description="Helicase ATP-binding" evidence="3">
    <location>
        <begin position="159"/>
        <end position="347"/>
    </location>
</feature>
<feature type="domain" description="Helicase C-terminal" evidence="4">
    <location>
        <begin position="388"/>
        <end position="589"/>
    </location>
</feature>
<feature type="domain" description="SEC63">
    <location>
        <begin position="646"/>
        <end position="961"/>
    </location>
</feature>
<feature type="zinc finger region" description="C4-type" evidence="2">
    <location>
        <begin position="1016"/>
        <end position="1031"/>
    </location>
</feature>
<feature type="short sequence motif" description="DEAH box">
    <location>
        <begin position="280"/>
        <end position="283"/>
    </location>
</feature>
<feature type="binding site" evidence="3">
    <location>
        <begin position="172"/>
        <end position="179"/>
    </location>
    <ligand>
        <name>ATP</name>
        <dbReference type="ChEBI" id="CHEBI:30616"/>
    </ligand>
</feature>
<organism>
    <name type="scientific">Xenopus tropicalis</name>
    <name type="common">Western clawed frog</name>
    <name type="synonym">Silurana tropicalis</name>
    <dbReference type="NCBI Taxonomy" id="8364"/>
    <lineage>
        <taxon>Eukaryota</taxon>
        <taxon>Metazoa</taxon>
        <taxon>Chordata</taxon>
        <taxon>Craniata</taxon>
        <taxon>Vertebrata</taxon>
        <taxon>Euteleostomi</taxon>
        <taxon>Amphibia</taxon>
        <taxon>Batrachia</taxon>
        <taxon>Anura</taxon>
        <taxon>Pipoidea</taxon>
        <taxon>Pipidae</taxon>
        <taxon>Xenopodinae</taxon>
        <taxon>Xenopus</taxon>
        <taxon>Silurana</taxon>
    </lineage>
</organism>
<proteinExistence type="evidence at transcript level"/>
<evidence type="ECO:0000250" key="1">
    <source>
        <dbReference type="UniProtKB" id="D3Z4R1"/>
    </source>
</evidence>
<evidence type="ECO:0000250" key="2">
    <source>
        <dbReference type="UniProtKB" id="P51979"/>
    </source>
</evidence>
<evidence type="ECO:0000255" key="3">
    <source>
        <dbReference type="PROSITE-ProRule" id="PRU00541"/>
    </source>
</evidence>
<evidence type="ECO:0000255" key="4">
    <source>
        <dbReference type="PROSITE-ProRule" id="PRU00542"/>
    </source>
</evidence>
<evidence type="ECO:0000305" key="5"/>
<comment type="function">
    <text evidence="1">Required for crossover formation and complete synapsis of homologous chromosomes during meiosis.</text>
</comment>
<comment type="catalytic activity">
    <reaction evidence="2">
        <text>Couples ATP hydrolysis with the unwinding of duplex DNA by translocating in the 3'-5' direction.</text>
        <dbReference type="EC" id="5.6.2.4"/>
    </reaction>
</comment>
<comment type="catalytic activity">
    <reaction evidence="2">
        <text>ATP + H2O = ADP + phosphate + H(+)</text>
        <dbReference type="Rhea" id="RHEA:13065"/>
        <dbReference type="ChEBI" id="CHEBI:15377"/>
        <dbReference type="ChEBI" id="CHEBI:15378"/>
        <dbReference type="ChEBI" id="CHEBI:30616"/>
        <dbReference type="ChEBI" id="CHEBI:43474"/>
        <dbReference type="ChEBI" id="CHEBI:456216"/>
        <dbReference type="EC" id="5.6.2.4"/>
    </reaction>
</comment>
<comment type="cofactor">
    <cofactor evidence="2">
        <name>Zn(2+)</name>
        <dbReference type="ChEBI" id="CHEBI:29105"/>
    </cofactor>
    <text evidence="2">Might have a zinc-finger.</text>
</comment>
<comment type="similarity">
    <text evidence="5">Belongs to the helicase family. SKI2 subfamily.</text>
</comment>
<comment type="sequence caution" evidence="5">
    <conflict type="erroneous initiation">
        <sequence resource="EMBL-CDS" id="AAI21499"/>
    </conflict>
</comment>
<accession>A2RUV5</accession>
<accession>Q0V9K6</accession>
<gene>
    <name type="primary">hfm1</name>
</gene>
<name>HFM1_XENTR</name>
<keyword id="KW-0067">ATP-binding</keyword>
<keyword id="KW-0347">Helicase</keyword>
<keyword id="KW-0378">Hydrolase</keyword>
<keyword id="KW-0413">Isomerase</keyword>
<keyword id="KW-0469">Meiosis</keyword>
<keyword id="KW-0479">Metal-binding</keyword>
<keyword id="KW-0547">Nucleotide-binding</keyword>
<keyword id="KW-1185">Reference proteome</keyword>
<keyword id="KW-0862">Zinc</keyword>
<keyword id="KW-0863">Zinc-finger</keyword>